<sequence length="460" mass="52115">MEAICSSLEPLFPCREAAIETLGELIGDSSETYPSAIYLFGHSGTGKTALTRAFLKECGKRQNVRTAHLNAIECYTTKIMLEILLDSLAPDQGDALKVDNMLDFVEQLRRQAATRVEDQGFLIAVDNAERLRDMDANVLPVLLRLQELTNLNLCVILLSQLPFEKFYNKTGLSEIVCLHLAQYNKAETQRILGSDFQQVRNQLLEQFAQDKKRLEICQEAVTEDFYNNYLNLFLSVFYKACRDVPELQLTARKCLSTYLEPVLDGTVDATDISRLWRHIAGPLRSALTQIYMRIEKPAEEVEDFTAIEDQSVRKLAQSLELPYYAKFLLIAAFLASHNAAKQDKRLFVKHHGKQRKRMQTVNARAKTTEKMSTTLGPKSFSIDRLLAIFYAILEEKVGLTCNLLSQISTLVHLNLLSFVSGEQNIMEGSARLQCTIGLEFVLQIGKVVGFNVRQYLCDFM</sequence>
<protein>
    <recommendedName>
        <fullName>Origin recognition complex subunit 5</fullName>
    </recommendedName>
</protein>
<proteinExistence type="evidence at protein level"/>
<comment type="function">
    <text evidence="1">Component of the origin recognition complex (ORC) that binds origins of replication. DNA-binding is ATP-dependent, however specific DNA sequences that define origins of replication have not been identified so far. ORC is required to assemble the pre-replication complex necessary to initiate DNA replication (By similarity).</text>
</comment>
<comment type="subunit">
    <text>ORC is composed of six subunits.</text>
</comment>
<comment type="subcellular location">
    <subcellularLocation>
        <location>Nucleus</location>
    </subcellularLocation>
</comment>
<comment type="similarity">
    <text evidence="3">Belongs to the ORC5 family.</text>
</comment>
<organism>
    <name type="scientific">Drosophila melanogaster</name>
    <name type="common">Fruit fly</name>
    <dbReference type="NCBI Taxonomy" id="7227"/>
    <lineage>
        <taxon>Eukaryota</taxon>
        <taxon>Metazoa</taxon>
        <taxon>Ecdysozoa</taxon>
        <taxon>Arthropoda</taxon>
        <taxon>Hexapoda</taxon>
        <taxon>Insecta</taxon>
        <taxon>Pterygota</taxon>
        <taxon>Neoptera</taxon>
        <taxon>Endopterygota</taxon>
        <taxon>Diptera</taxon>
        <taxon>Brachycera</taxon>
        <taxon>Muscomorpha</taxon>
        <taxon>Ephydroidea</taxon>
        <taxon>Drosophilidae</taxon>
        <taxon>Drosophila</taxon>
        <taxon>Sophophora</taxon>
    </lineage>
</organism>
<keyword id="KW-0002">3D-structure</keyword>
<keyword id="KW-0067">ATP-binding</keyword>
<keyword id="KW-0235">DNA replication</keyword>
<keyword id="KW-0547">Nucleotide-binding</keyword>
<keyword id="KW-0539">Nucleus</keyword>
<keyword id="KW-1185">Reference proteome</keyword>
<accession>Q24169</accession>
<accession>Q9V398</accession>
<reference key="1">
    <citation type="journal article" date="1995" name="Science">
        <title>A Drosophila homolog of the yeast origin recognition complex.</title>
        <authorList>
            <person name="Gossen M."/>
            <person name="Pak D.T.S."/>
            <person name="Hansen S.K."/>
            <person name="Acharya J.K."/>
            <person name="Botchan M.R."/>
        </authorList>
    </citation>
    <scope>NUCLEOTIDE SEQUENCE [MRNA]</scope>
</reference>
<reference key="2">
    <citation type="journal article" date="1999" name="Genetics">
        <title>An exploration of the sequence of a 2.9-Mb region of the genome of Drosophila melanogaster: the Adh region.</title>
        <authorList>
            <person name="Ashburner M."/>
            <person name="Misra S."/>
            <person name="Roote J."/>
            <person name="Lewis S.E."/>
            <person name="Blazej R.G."/>
            <person name="Davis T."/>
            <person name="Doyle C."/>
            <person name="Galle R.F."/>
            <person name="George R.A."/>
            <person name="Harris N.L."/>
            <person name="Hartzell G."/>
            <person name="Harvey D.A."/>
            <person name="Hong L."/>
            <person name="Houston K.A."/>
            <person name="Hoskins R.A."/>
            <person name="Johnson G."/>
            <person name="Martin C."/>
            <person name="Moshrefi A.R."/>
            <person name="Palazzolo M."/>
            <person name="Reese M.G."/>
            <person name="Spradling A.C."/>
            <person name="Tsang G."/>
            <person name="Wan K.H."/>
            <person name="Whitelaw K."/>
            <person name="Celniker S.E."/>
            <person name="Rubin G.M."/>
        </authorList>
    </citation>
    <scope>NUCLEOTIDE SEQUENCE [LARGE SCALE GENOMIC DNA]</scope>
    <source>
        <strain>Berkeley</strain>
    </source>
</reference>
<reference key="3">
    <citation type="journal article" date="2000" name="Science">
        <title>The genome sequence of Drosophila melanogaster.</title>
        <authorList>
            <person name="Adams M.D."/>
            <person name="Celniker S.E."/>
            <person name="Holt R.A."/>
            <person name="Evans C.A."/>
            <person name="Gocayne J.D."/>
            <person name="Amanatides P.G."/>
            <person name="Scherer S.E."/>
            <person name="Li P.W."/>
            <person name="Hoskins R.A."/>
            <person name="Galle R.F."/>
            <person name="George R.A."/>
            <person name="Lewis S.E."/>
            <person name="Richards S."/>
            <person name="Ashburner M."/>
            <person name="Henderson S.N."/>
            <person name="Sutton G.G."/>
            <person name="Wortman J.R."/>
            <person name="Yandell M.D."/>
            <person name="Zhang Q."/>
            <person name="Chen L.X."/>
            <person name="Brandon R.C."/>
            <person name="Rogers Y.-H.C."/>
            <person name="Blazej R.G."/>
            <person name="Champe M."/>
            <person name="Pfeiffer B.D."/>
            <person name="Wan K.H."/>
            <person name="Doyle C."/>
            <person name="Baxter E.G."/>
            <person name="Helt G."/>
            <person name="Nelson C.R."/>
            <person name="Miklos G.L.G."/>
            <person name="Abril J.F."/>
            <person name="Agbayani A."/>
            <person name="An H.-J."/>
            <person name="Andrews-Pfannkoch C."/>
            <person name="Baldwin D."/>
            <person name="Ballew R.M."/>
            <person name="Basu A."/>
            <person name="Baxendale J."/>
            <person name="Bayraktaroglu L."/>
            <person name="Beasley E.M."/>
            <person name="Beeson K.Y."/>
            <person name="Benos P.V."/>
            <person name="Berman B.P."/>
            <person name="Bhandari D."/>
            <person name="Bolshakov S."/>
            <person name="Borkova D."/>
            <person name="Botchan M.R."/>
            <person name="Bouck J."/>
            <person name="Brokstein P."/>
            <person name="Brottier P."/>
            <person name="Burtis K.C."/>
            <person name="Busam D.A."/>
            <person name="Butler H."/>
            <person name="Cadieu E."/>
            <person name="Center A."/>
            <person name="Chandra I."/>
            <person name="Cherry J.M."/>
            <person name="Cawley S."/>
            <person name="Dahlke C."/>
            <person name="Davenport L.B."/>
            <person name="Davies P."/>
            <person name="de Pablos B."/>
            <person name="Delcher A."/>
            <person name="Deng Z."/>
            <person name="Mays A.D."/>
            <person name="Dew I."/>
            <person name="Dietz S.M."/>
            <person name="Dodson K."/>
            <person name="Doup L.E."/>
            <person name="Downes M."/>
            <person name="Dugan-Rocha S."/>
            <person name="Dunkov B.C."/>
            <person name="Dunn P."/>
            <person name="Durbin K.J."/>
            <person name="Evangelista C.C."/>
            <person name="Ferraz C."/>
            <person name="Ferriera S."/>
            <person name="Fleischmann W."/>
            <person name="Fosler C."/>
            <person name="Gabrielian A.E."/>
            <person name="Garg N.S."/>
            <person name="Gelbart W.M."/>
            <person name="Glasser K."/>
            <person name="Glodek A."/>
            <person name="Gong F."/>
            <person name="Gorrell J.H."/>
            <person name="Gu Z."/>
            <person name="Guan P."/>
            <person name="Harris M."/>
            <person name="Harris N.L."/>
            <person name="Harvey D.A."/>
            <person name="Heiman T.J."/>
            <person name="Hernandez J.R."/>
            <person name="Houck J."/>
            <person name="Hostin D."/>
            <person name="Houston K.A."/>
            <person name="Howland T.J."/>
            <person name="Wei M.-H."/>
            <person name="Ibegwam C."/>
            <person name="Jalali M."/>
            <person name="Kalush F."/>
            <person name="Karpen G.H."/>
            <person name="Ke Z."/>
            <person name="Kennison J.A."/>
            <person name="Ketchum K.A."/>
            <person name="Kimmel B.E."/>
            <person name="Kodira C.D."/>
            <person name="Kraft C.L."/>
            <person name="Kravitz S."/>
            <person name="Kulp D."/>
            <person name="Lai Z."/>
            <person name="Lasko P."/>
            <person name="Lei Y."/>
            <person name="Levitsky A.A."/>
            <person name="Li J.H."/>
            <person name="Li Z."/>
            <person name="Liang Y."/>
            <person name="Lin X."/>
            <person name="Liu X."/>
            <person name="Mattei B."/>
            <person name="McIntosh T.C."/>
            <person name="McLeod M.P."/>
            <person name="McPherson D."/>
            <person name="Merkulov G."/>
            <person name="Milshina N.V."/>
            <person name="Mobarry C."/>
            <person name="Morris J."/>
            <person name="Moshrefi A."/>
            <person name="Mount S.M."/>
            <person name="Moy M."/>
            <person name="Murphy B."/>
            <person name="Murphy L."/>
            <person name="Muzny D.M."/>
            <person name="Nelson D.L."/>
            <person name="Nelson D.R."/>
            <person name="Nelson K.A."/>
            <person name="Nixon K."/>
            <person name="Nusskern D.R."/>
            <person name="Pacleb J.M."/>
            <person name="Palazzolo M."/>
            <person name="Pittman G.S."/>
            <person name="Pan S."/>
            <person name="Pollard J."/>
            <person name="Puri V."/>
            <person name="Reese M.G."/>
            <person name="Reinert K."/>
            <person name="Remington K."/>
            <person name="Saunders R.D.C."/>
            <person name="Scheeler F."/>
            <person name="Shen H."/>
            <person name="Shue B.C."/>
            <person name="Siden-Kiamos I."/>
            <person name="Simpson M."/>
            <person name="Skupski M.P."/>
            <person name="Smith T.J."/>
            <person name="Spier E."/>
            <person name="Spradling A.C."/>
            <person name="Stapleton M."/>
            <person name="Strong R."/>
            <person name="Sun E."/>
            <person name="Svirskas R."/>
            <person name="Tector C."/>
            <person name="Turner R."/>
            <person name="Venter E."/>
            <person name="Wang A.H."/>
            <person name="Wang X."/>
            <person name="Wang Z.-Y."/>
            <person name="Wassarman D.A."/>
            <person name="Weinstock G.M."/>
            <person name="Weissenbach J."/>
            <person name="Williams S.M."/>
            <person name="Woodage T."/>
            <person name="Worley K.C."/>
            <person name="Wu D."/>
            <person name="Yang S."/>
            <person name="Yao Q.A."/>
            <person name="Ye J."/>
            <person name="Yeh R.-F."/>
            <person name="Zaveri J.S."/>
            <person name="Zhan M."/>
            <person name="Zhang G."/>
            <person name="Zhao Q."/>
            <person name="Zheng L."/>
            <person name="Zheng X.H."/>
            <person name="Zhong F.N."/>
            <person name="Zhong W."/>
            <person name="Zhou X."/>
            <person name="Zhu S.C."/>
            <person name="Zhu X."/>
            <person name="Smith H.O."/>
            <person name="Gibbs R.A."/>
            <person name="Myers E.W."/>
            <person name="Rubin G.M."/>
            <person name="Venter J.C."/>
        </authorList>
    </citation>
    <scope>NUCLEOTIDE SEQUENCE [LARGE SCALE GENOMIC DNA]</scope>
    <source>
        <strain>Berkeley</strain>
    </source>
</reference>
<reference key="4">
    <citation type="journal article" date="2002" name="Genome Biol.">
        <title>Annotation of the Drosophila melanogaster euchromatic genome: a systematic review.</title>
        <authorList>
            <person name="Misra S."/>
            <person name="Crosby M.A."/>
            <person name="Mungall C.J."/>
            <person name="Matthews B.B."/>
            <person name="Campbell K.S."/>
            <person name="Hradecky P."/>
            <person name="Huang Y."/>
            <person name="Kaminker J.S."/>
            <person name="Millburn G.H."/>
            <person name="Prochnik S.E."/>
            <person name="Smith C.D."/>
            <person name="Tupy J.L."/>
            <person name="Whitfield E.J."/>
            <person name="Bayraktaroglu L."/>
            <person name="Berman B.P."/>
            <person name="Bettencourt B.R."/>
            <person name="Celniker S.E."/>
            <person name="de Grey A.D.N.J."/>
            <person name="Drysdale R.A."/>
            <person name="Harris N.L."/>
            <person name="Richter J."/>
            <person name="Russo S."/>
            <person name="Schroeder A.J."/>
            <person name="Shu S.Q."/>
            <person name="Stapleton M."/>
            <person name="Yamada C."/>
            <person name="Ashburner M."/>
            <person name="Gelbart W.M."/>
            <person name="Rubin G.M."/>
            <person name="Lewis S.E."/>
        </authorList>
    </citation>
    <scope>GENOME REANNOTATION</scope>
    <source>
        <strain>Berkeley</strain>
    </source>
</reference>
<reference key="5">
    <citation type="journal article" date="2002" name="Genome Biol.">
        <title>A Drosophila full-length cDNA resource.</title>
        <authorList>
            <person name="Stapleton M."/>
            <person name="Carlson J.W."/>
            <person name="Brokstein P."/>
            <person name="Yu C."/>
            <person name="Champe M."/>
            <person name="George R.A."/>
            <person name="Guarin H."/>
            <person name="Kronmiller B."/>
            <person name="Pacleb J.M."/>
            <person name="Park S."/>
            <person name="Wan K.H."/>
            <person name="Rubin G.M."/>
            <person name="Celniker S.E."/>
        </authorList>
    </citation>
    <scope>NUCLEOTIDE SEQUENCE [LARGE SCALE MRNA]</scope>
    <source>
        <strain>Berkeley</strain>
        <tissue>Embryo</tissue>
    </source>
</reference>
<name>ORC5_DROME</name>
<feature type="chain" id="PRO_0000127094" description="Origin recognition complex subunit 5">
    <location>
        <begin position="1"/>
        <end position="460"/>
    </location>
</feature>
<feature type="binding site" evidence="2">
    <location>
        <begin position="41"/>
        <end position="48"/>
    </location>
    <ligand>
        <name>ATP</name>
        <dbReference type="ChEBI" id="CHEBI:30616"/>
    </ligand>
</feature>
<feature type="helix" evidence="5">
    <location>
        <begin position="2"/>
        <end position="11"/>
    </location>
</feature>
<feature type="helix" evidence="5">
    <location>
        <begin position="16"/>
        <end position="26"/>
    </location>
</feature>
<feature type="strand" evidence="5">
    <location>
        <begin position="29"/>
        <end position="31"/>
    </location>
</feature>
<feature type="strand" evidence="5">
    <location>
        <begin position="35"/>
        <end position="41"/>
    </location>
</feature>
<feature type="strand" evidence="6">
    <location>
        <begin position="45"/>
        <end position="47"/>
    </location>
</feature>
<feature type="helix" evidence="5">
    <location>
        <begin position="48"/>
        <end position="61"/>
    </location>
</feature>
<feature type="strand" evidence="5">
    <location>
        <begin position="62"/>
        <end position="70"/>
    </location>
</feature>
<feature type="turn" evidence="5">
    <location>
        <begin position="71"/>
        <end position="73"/>
    </location>
</feature>
<feature type="helix" evidence="5">
    <location>
        <begin position="77"/>
        <end position="88"/>
    </location>
</feature>
<feature type="helix" evidence="5">
    <location>
        <begin position="93"/>
        <end position="95"/>
    </location>
</feature>
<feature type="helix" evidence="5">
    <location>
        <begin position="101"/>
        <end position="109"/>
    </location>
</feature>
<feature type="strand" evidence="7">
    <location>
        <begin position="115"/>
        <end position="117"/>
    </location>
</feature>
<feature type="strand" evidence="5">
    <location>
        <begin position="120"/>
        <end position="127"/>
    </location>
</feature>
<feature type="helix" evidence="5">
    <location>
        <begin position="128"/>
        <end position="133"/>
    </location>
</feature>
<feature type="strand" evidence="5">
    <location>
        <begin position="136"/>
        <end position="138"/>
    </location>
</feature>
<feature type="helix" evidence="5">
    <location>
        <begin position="139"/>
        <end position="142"/>
    </location>
</feature>
<feature type="helix" evidence="5">
    <location>
        <begin position="145"/>
        <end position="149"/>
    </location>
</feature>
<feature type="strand" evidence="5">
    <location>
        <begin position="151"/>
        <end position="161"/>
    </location>
</feature>
<feature type="helix" evidence="5">
    <location>
        <begin position="163"/>
        <end position="165"/>
    </location>
</feature>
<feature type="strand" evidence="5">
    <location>
        <begin position="176"/>
        <end position="180"/>
    </location>
</feature>
<feature type="helix" evidence="5">
    <location>
        <begin position="185"/>
        <end position="193"/>
    </location>
</feature>
<feature type="helix" evidence="5">
    <location>
        <begin position="196"/>
        <end position="205"/>
    </location>
</feature>
<feature type="helix" evidence="5">
    <location>
        <begin position="212"/>
        <end position="219"/>
    </location>
</feature>
<feature type="helix" evidence="5">
    <location>
        <begin position="223"/>
        <end position="237"/>
    </location>
</feature>
<feature type="turn" evidence="5">
    <location>
        <begin position="238"/>
        <end position="240"/>
    </location>
</feature>
<feature type="helix" evidence="5">
    <location>
        <begin position="244"/>
        <end position="258"/>
    </location>
</feature>
<feature type="helix" evidence="5">
    <location>
        <begin position="260"/>
        <end position="264"/>
    </location>
</feature>
<feature type="helix" evidence="5">
    <location>
        <begin position="276"/>
        <end position="287"/>
    </location>
</feature>
<feature type="turn" evidence="5">
    <location>
        <begin position="288"/>
        <end position="291"/>
    </location>
</feature>
<feature type="helix" evidence="5">
    <location>
        <begin position="323"/>
        <end position="337"/>
    </location>
</feature>
<feature type="turn" evidence="5">
    <location>
        <begin position="340"/>
        <end position="342"/>
    </location>
</feature>
<feature type="helix" evidence="5">
    <location>
        <begin position="343"/>
        <end position="347"/>
    </location>
</feature>
<feature type="turn" evidence="4">
    <location>
        <begin position="373"/>
        <end position="375"/>
    </location>
</feature>
<feature type="strand" evidence="4">
    <location>
        <begin position="379"/>
        <end position="381"/>
    </location>
</feature>
<feature type="helix" evidence="5">
    <location>
        <begin position="382"/>
        <end position="393"/>
    </location>
</feature>
<feature type="helix" evidence="5">
    <location>
        <begin position="401"/>
        <end position="412"/>
    </location>
</feature>
<feature type="strand" evidence="5">
    <location>
        <begin position="415"/>
        <end position="420"/>
    </location>
</feature>
<feature type="strand" evidence="6">
    <location>
        <begin position="422"/>
        <end position="424"/>
    </location>
</feature>
<feature type="turn" evidence="5">
    <location>
        <begin position="425"/>
        <end position="428"/>
    </location>
</feature>
<feature type="strand" evidence="5">
    <location>
        <begin position="431"/>
        <end position="434"/>
    </location>
</feature>
<feature type="helix" evidence="5">
    <location>
        <begin position="438"/>
        <end position="448"/>
    </location>
</feature>
<feature type="turn" evidence="5">
    <location>
        <begin position="453"/>
        <end position="455"/>
    </location>
</feature>
<evidence type="ECO:0000250" key="1"/>
<evidence type="ECO:0000255" key="2"/>
<evidence type="ECO:0000305" key="3"/>
<evidence type="ECO:0007829" key="4">
    <source>
        <dbReference type="PDB" id="4XGC"/>
    </source>
</evidence>
<evidence type="ECO:0007829" key="5">
    <source>
        <dbReference type="PDB" id="7JGS"/>
    </source>
</evidence>
<evidence type="ECO:0007829" key="6">
    <source>
        <dbReference type="PDB" id="7JK2"/>
    </source>
</evidence>
<evidence type="ECO:0007829" key="7">
    <source>
        <dbReference type="PDB" id="7JK3"/>
    </source>
</evidence>
<gene>
    <name type="primary">Orc5</name>
    <name type="ORF">CG7833</name>
</gene>
<dbReference type="EMBL" id="U43505">
    <property type="protein sequence ID" value="AAC46956.1"/>
    <property type="molecule type" value="mRNA"/>
</dbReference>
<dbReference type="EMBL" id="AE014134">
    <property type="protein sequence ID" value="AAF53340.1"/>
    <property type="molecule type" value="Genomic_DNA"/>
</dbReference>
<dbReference type="EMBL" id="AY089590">
    <property type="protein sequence ID" value="AAL90328.1"/>
    <property type="molecule type" value="mRNA"/>
</dbReference>
<dbReference type="RefSeq" id="NP_477132.1">
    <property type="nucleotide sequence ID" value="NM_057784.8"/>
</dbReference>
<dbReference type="PDB" id="4XGC">
    <property type="method" value="X-ray"/>
    <property type="resolution" value="3.50 A"/>
    <property type="chains" value="E=1-460"/>
</dbReference>
<dbReference type="PDB" id="7JGR">
    <property type="method" value="EM"/>
    <property type="resolution" value="3.90 A"/>
    <property type="chains" value="E=1-460"/>
</dbReference>
<dbReference type="PDB" id="7JGS">
    <property type="method" value="EM"/>
    <property type="resolution" value="3.20 A"/>
    <property type="chains" value="E=1-460"/>
</dbReference>
<dbReference type="PDB" id="7JK2">
    <property type="method" value="EM"/>
    <property type="resolution" value="3.20 A"/>
    <property type="chains" value="E=1-460"/>
</dbReference>
<dbReference type="PDB" id="7JK3">
    <property type="method" value="EM"/>
    <property type="resolution" value="3.40 A"/>
    <property type="chains" value="E=1-460"/>
</dbReference>
<dbReference type="PDB" id="7JK4">
    <property type="method" value="EM"/>
    <property type="resolution" value="3.40 A"/>
    <property type="chains" value="E=1-460"/>
</dbReference>
<dbReference type="PDB" id="7JK5">
    <property type="method" value="EM"/>
    <property type="resolution" value="3.90 A"/>
    <property type="chains" value="E=1-460"/>
</dbReference>
<dbReference type="PDB" id="7JK6">
    <property type="method" value="EM"/>
    <property type="resolution" value="4.00 A"/>
    <property type="chains" value="E=1-460"/>
</dbReference>
<dbReference type="PDBsum" id="4XGC"/>
<dbReference type="PDBsum" id="7JGR"/>
<dbReference type="PDBsum" id="7JGS"/>
<dbReference type="PDBsum" id="7JK2"/>
<dbReference type="PDBsum" id="7JK3"/>
<dbReference type="PDBsum" id="7JK4"/>
<dbReference type="PDBsum" id="7JK5"/>
<dbReference type="PDBsum" id="7JK6"/>
<dbReference type="EMDB" id="EMD-22329"/>
<dbReference type="EMDB" id="EMD-22330"/>
<dbReference type="EMDB" id="EMD-22359"/>
<dbReference type="EMDB" id="EMD-22360"/>
<dbReference type="EMDB" id="EMD-22361"/>
<dbReference type="EMDB" id="EMD-22362"/>
<dbReference type="EMDB" id="EMD-22363"/>
<dbReference type="SMR" id="Q24169"/>
<dbReference type="BioGRID" id="60827">
    <property type="interactions" value="14"/>
</dbReference>
<dbReference type="ComplexPortal" id="CPX-2369">
    <property type="entry name" value="Nuclear origin recognition complex"/>
</dbReference>
<dbReference type="DIP" id="DIP-49320N"/>
<dbReference type="FunCoup" id="Q24169">
    <property type="interactions" value="2880"/>
</dbReference>
<dbReference type="IntAct" id="Q24169">
    <property type="interactions" value="4"/>
</dbReference>
<dbReference type="STRING" id="7227.FBpp0080120"/>
<dbReference type="PaxDb" id="7227-FBpp0080120"/>
<dbReference type="DNASU" id="34794"/>
<dbReference type="EnsemblMetazoa" id="FBtr0080543">
    <property type="protein sequence ID" value="FBpp0080120"/>
    <property type="gene ID" value="FBgn0015271"/>
</dbReference>
<dbReference type="GeneID" id="34794"/>
<dbReference type="KEGG" id="dme:Dmel_CG7833"/>
<dbReference type="AGR" id="FB:FBgn0015271"/>
<dbReference type="CTD" id="5001"/>
<dbReference type="FlyBase" id="FBgn0015271">
    <property type="gene designation" value="Orc5"/>
</dbReference>
<dbReference type="VEuPathDB" id="VectorBase:FBgn0015271"/>
<dbReference type="eggNOG" id="KOG2543">
    <property type="taxonomic scope" value="Eukaryota"/>
</dbReference>
<dbReference type="GeneTree" id="ENSGT00390000009380"/>
<dbReference type="HOGENOM" id="CLU_028223_0_1_1"/>
<dbReference type="InParanoid" id="Q24169"/>
<dbReference type="OMA" id="QLRRWHG"/>
<dbReference type="OrthoDB" id="365981at2759"/>
<dbReference type="PhylomeDB" id="Q24169"/>
<dbReference type="Reactome" id="R-DME-176187">
    <property type="pathway name" value="Activation of ATR in response to replication stress"/>
</dbReference>
<dbReference type="Reactome" id="R-DME-68616">
    <property type="pathway name" value="Assembly of the ORC complex at the origin of replication"/>
</dbReference>
<dbReference type="Reactome" id="R-DME-68689">
    <property type="pathway name" value="CDC6 association with the ORC:origin complex"/>
</dbReference>
<dbReference type="Reactome" id="R-DME-68949">
    <property type="pathway name" value="Orc1 removal from chromatin"/>
</dbReference>
<dbReference type="Reactome" id="R-DME-68962">
    <property type="pathway name" value="Activation of the pre-replicative complex"/>
</dbReference>
<dbReference type="SignaLink" id="Q24169"/>
<dbReference type="BioGRID-ORCS" id="34794">
    <property type="hits" value="1 hit in 3 CRISPR screens"/>
</dbReference>
<dbReference type="CD-CODE" id="19512460">
    <property type="entry name" value="Synthetic Condensate 000336"/>
</dbReference>
<dbReference type="CD-CODE" id="477BAC9B">
    <property type="entry name" value="Synthetic Condensate 000340"/>
</dbReference>
<dbReference type="EvolutionaryTrace" id="Q24169"/>
<dbReference type="GenomeRNAi" id="34794"/>
<dbReference type="PRO" id="PR:Q24169"/>
<dbReference type="Proteomes" id="UP000000803">
    <property type="component" value="Chromosome 2L"/>
</dbReference>
<dbReference type="Bgee" id="FBgn0015271">
    <property type="expression patterns" value="Expressed in secondary oocyte and 39 other cell types or tissues"/>
</dbReference>
<dbReference type="GO" id="GO:0005664">
    <property type="term" value="C:nuclear origin of replication recognition complex"/>
    <property type="evidence" value="ECO:0000314"/>
    <property type="project" value="FlyBase"/>
</dbReference>
<dbReference type="GO" id="GO:0005634">
    <property type="term" value="C:nucleus"/>
    <property type="evidence" value="ECO:0000314"/>
    <property type="project" value="UniProtKB"/>
</dbReference>
<dbReference type="GO" id="GO:0005524">
    <property type="term" value="F:ATP binding"/>
    <property type="evidence" value="ECO:0007669"/>
    <property type="project" value="UniProtKB-KW"/>
</dbReference>
<dbReference type="GO" id="GO:0016887">
    <property type="term" value="F:ATP hydrolysis activity"/>
    <property type="evidence" value="ECO:0007669"/>
    <property type="project" value="InterPro"/>
</dbReference>
<dbReference type="GO" id="GO:0003688">
    <property type="term" value="F:DNA replication origin binding"/>
    <property type="evidence" value="ECO:0000318"/>
    <property type="project" value="GO_Central"/>
</dbReference>
<dbReference type="GO" id="GO:0043021">
    <property type="term" value="F:ribonucleoprotein complex binding"/>
    <property type="evidence" value="ECO:0000314"/>
    <property type="project" value="UniProtKB"/>
</dbReference>
<dbReference type="GO" id="GO:0006260">
    <property type="term" value="P:DNA replication"/>
    <property type="evidence" value="ECO:0000315"/>
    <property type="project" value="FlyBase"/>
</dbReference>
<dbReference type="GO" id="GO:0006270">
    <property type="term" value="P:DNA replication initiation"/>
    <property type="evidence" value="ECO:0000314"/>
    <property type="project" value="FlyBase"/>
</dbReference>
<dbReference type="GO" id="GO:0006261">
    <property type="term" value="P:DNA-templated DNA replication"/>
    <property type="evidence" value="ECO:0000250"/>
    <property type="project" value="FlyBase"/>
</dbReference>
<dbReference type="GO" id="GO:0007076">
    <property type="term" value="P:mitotic chromosome condensation"/>
    <property type="evidence" value="ECO:0000315"/>
    <property type="project" value="FlyBase"/>
</dbReference>
<dbReference type="GO" id="GO:0007052">
    <property type="term" value="P:mitotic spindle organization"/>
    <property type="evidence" value="ECO:0000315"/>
    <property type="project" value="FlyBase"/>
</dbReference>
<dbReference type="CDD" id="cd00009">
    <property type="entry name" value="AAA"/>
    <property type="match status" value="1"/>
</dbReference>
<dbReference type="FunFam" id="3.40.50.300:FF:000673">
    <property type="entry name" value="Origin recognition complex subunit 5"/>
    <property type="match status" value="1"/>
</dbReference>
<dbReference type="Gene3D" id="3.40.50.300">
    <property type="entry name" value="P-loop containing nucleotide triphosphate hydrolases"/>
    <property type="match status" value="1"/>
</dbReference>
<dbReference type="InterPro" id="IPR003593">
    <property type="entry name" value="AAA+_ATPase"/>
</dbReference>
<dbReference type="InterPro" id="IPR041664">
    <property type="entry name" value="AAA_16"/>
</dbReference>
<dbReference type="InterPro" id="IPR020796">
    <property type="entry name" value="ORC5"/>
</dbReference>
<dbReference type="InterPro" id="IPR047088">
    <property type="entry name" value="ORC5_C"/>
</dbReference>
<dbReference type="InterPro" id="IPR048866">
    <property type="entry name" value="ORC5_lid"/>
</dbReference>
<dbReference type="InterPro" id="IPR027417">
    <property type="entry name" value="P-loop_NTPase"/>
</dbReference>
<dbReference type="PANTHER" id="PTHR12705">
    <property type="entry name" value="ORIGIN RECOGNITION COMPLEX SUBUNIT 5"/>
    <property type="match status" value="1"/>
</dbReference>
<dbReference type="PANTHER" id="PTHR12705:SF0">
    <property type="entry name" value="ORIGIN RECOGNITION COMPLEX SUBUNIT 5"/>
    <property type="match status" value="1"/>
</dbReference>
<dbReference type="Pfam" id="PF13191">
    <property type="entry name" value="AAA_16"/>
    <property type="match status" value="1"/>
</dbReference>
<dbReference type="Pfam" id="PF14630">
    <property type="entry name" value="ORC5_C"/>
    <property type="match status" value="1"/>
</dbReference>
<dbReference type="Pfam" id="PF21639">
    <property type="entry name" value="ORC5_lid"/>
    <property type="match status" value="1"/>
</dbReference>
<dbReference type="SMART" id="SM00382">
    <property type="entry name" value="AAA"/>
    <property type="match status" value="1"/>
</dbReference>
<dbReference type="SUPFAM" id="SSF52540">
    <property type="entry name" value="P-loop containing nucleoside triphosphate hydrolases"/>
    <property type="match status" value="1"/>
</dbReference>